<evidence type="ECO:0000250" key="1">
    <source>
        <dbReference type="UniProtKB" id="P10760"/>
    </source>
</evidence>
<evidence type="ECO:0000269" key="2">
    <source>
    </source>
</evidence>
<evidence type="ECO:0000303" key="3">
    <source>
    </source>
</evidence>
<evidence type="ECO:0000303" key="4">
    <source>
    </source>
</evidence>
<evidence type="ECO:0000305" key="5"/>
<evidence type="ECO:0000305" key="6">
    <source>
    </source>
</evidence>
<evidence type="ECO:0000312" key="7">
    <source>
        <dbReference type="FlyBase" id="FBgn0014455"/>
    </source>
</evidence>
<keyword id="KW-0378">Hydrolase</keyword>
<keyword id="KW-0520">NAD</keyword>
<keyword id="KW-0554">One-carbon metabolism</keyword>
<keyword id="KW-1185">Reference proteome</keyword>
<organism>
    <name type="scientific">Drosophila melanogaster</name>
    <name type="common">Fruit fly</name>
    <dbReference type="NCBI Taxonomy" id="7227"/>
    <lineage>
        <taxon>Eukaryota</taxon>
        <taxon>Metazoa</taxon>
        <taxon>Ecdysozoa</taxon>
        <taxon>Arthropoda</taxon>
        <taxon>Hexapoda</taxon>
        <taxon>Insecta</taxon>
        <taxon>Pterygota</taxon>
        <taxon>Neoptera</taxon>
        <taxon>Endopterygota</taxon>
        <taxon>Diptera</taxon>
        <taxon>Brachycera</taxon>
        <taxon>Muscomorpha</taxon>
        <taxon>Ephydroidea</taxon>
        <taxon>Drosophilidae</taxon>
        <taxon>Drosophila</taxon>
        <taxon>Sophophora</taxon>
    </lineage>
</organism>
<accession>Q27580</accession>
<accession>Q8MZI1</accession>
<accession>Q9VXV5</accession>
<comment type="function">
    <text evidence="6">Adenosylhomocysteine is a competitive inhibitor of S-adenosyl-L-methionine-dependent methyl transferase reactions; therefore adenosylhomocysteinase may play a key role in the control of methylations via regulation of the intracellular concentration of adenosylhomocysteine.</text>
</comment>
<comment type="catalytic activity">
    <reaction evidence="6">
        <text>S-adenosyl-L-homocysteine + H2O = L-homocysteine + adenosine</text>
        <dbReference type="Rhea" id="RHEA:21708"/>
        <dbReference type="ChEBI" id="CHEBI:15377"/>
        <dbReference type="ChEBI" id="CHEBI:16335"/>
        <dbReference type="ChEBI" id="CHEBI:57856"/>
        <dbReference type="ChEBI" id="CHEBI:58199"/>
        <dbReference type="EC" id="3.13.2.1"/>
    </reaction>
</comment>
<comment type="cofactor">
    <cofactor evidence="1">
        <name>NAD(+)</name>
        <dbReference type="ChEBI" id="CHEBI:57540"/>
    </cofactor>
    <text evidence="1">Binds 1 NAD(+) per subunit.</text>
</comment>
<comment type="pathway">
    <text evidence="6">Amino-acid biosynthesis; L-homocysteine biosynthesis; L-homocysteine from S-adenosyl-L-homocysteine: step 1/1.</text>
</comment>
<comment type="subunit">
    <text evidence="2">Interacts with AhcyL1; the interaction may negatively regulate Ahcy catalytic activity.</text>
</comment>
<comment type="disruption phenotype">
    <text evidence="2">RNAi-mediated knockdown results in increased S-adenosyl-homocysteine levels and reduced lifespan.</text>
</comment>
<comment type="similarity">
    <text evidence="5">Belongs to the adenosylhomocysteinase family.</text>
</comment>
<dbReference type="EC" id="3.13.2.1" evidence="6"/>
<dbReference type="EMBL" id="X95636">
    <property type="protein sequence ID" value="CAA64892.1"/>
    <property type="molecule type" value="mRNA"/>
</dbReference>
<dbReference type="EMBL" id="AE014298">
    <property type="protein sequence ID" value="AAF48453.1"/>
    <property type="molecule type" value="Genomic_DNA"/>
</dbReference>
<dbReference type="EMBL" id="AY102668">
    <property type="protein sequence ID" value="AAM27497.1"/>
    <property type="molecule type" value="mRNA"/>
</dbReference>
<dbReference type="RefSeq" id="NP_001285268.1">
    <property type="nucleotide sequence ID" value="NM_001298339.1"/>
</dbReference>
<dbReference type="RefSeq" id="NP_511164.2">
    <property type="nucleotide sequence ID" value="NM_078609.4"/>
</dbReference>
<dbReference type="SMR" id="Q27580"/>
<dbReference type="BioGRID" id="58824">
    <property type="interactions" value="11"/>
</dbReference>
<dbReference type="FunCoup" id="Q27580">
    <property type="interactions" value="1354"/>
</dbReference>
<dbReference type="IntAct" id="Q27580">
    <property type="interactions" value="103"/>
</dbReference>
<dbReference type="STRING" id="7227.FBpp0312000"/>
<dbReference type="PaxDb" id="7227-FBpp0073847"/>
<dbReference type="DNASU" id="32471"/>
<dbReference type="EnsemblMetazoa" id="FBtr0074030">
    <property type="protein sequence ID" value="FBpp0073847"/>
    <property type="gene ID" value="FBgn0014455"/>
</dbReference>
<dbReference type="EnsemblMetazoa" id="FBtr0346181">
    <property type="protein sequence ID" value="FBpp0312000"/>
    <property type="gene ID" value="FBgn0014455"/>
</dbReference>
<dbReference type="GeneID" id="32471"/>
<dbReference type="KEGG" id="dme:Dmel_CG11654"/>
<dbReference type="AGR" id="FB:FBgn0014455"/>
<dbReference type="CTD" id="191"/>
<dbReference type="FlyBase" id="FBgn0014455">
    <property type="gene designation" value="Ahcy"/>
</dbReference>
<dbReference type="VEuPathDB" id="VectorBase:FBgn0014455"/>
<dbReference type="eggNOG" id="KOG1370">
    <property type="taxonomic scope" value="Eukaryota"/>
</dbReference>
<dbReference type="HOGENOM" id="CLU_025194_2_1_1"/>
<dbReference type="InParanoid" id="Q27580"/>
<dbReference type="OMA" id="YIGVTVE"/>
<dbReference type="OrthoDB" id="10007170at2759"/>
<dbReference type="PhylomeDB" id="Q27580"/>
<dbReference type="Reactome" id="R-DME-156581">
    <property type="pathway name" value="Methylation"/>
</dbReference>
<dbReference type="Reactome" id="R-DME-1614635">
    <property type="pathway name" value="Sulfur amino acid metabolism"/>
</dbReference>
<dbReference type="UniPathway" id="UPA00314">
    <property type="reaction ID" value="UER00076"/>
</dbReference>
<dbReference type="BioGRID-ORCS" id="32471">
    <property type="hits" value="1 hit in 1 CRISPR screen"/>
</dbReference>
<dbReference type="ChiTaRS" id="Ahcy13">
    <property type="organism name" value="fly"/>
</dbReference>
<dbReference type="GenomeRNAi" id="32471"/>
<dbReference type="PRO" id="PR:Q27580"/>
<dbReference type="Proteomes" id="UP000000803">
    <property type="component" value="Chromosome X"/>
</dbReference>
<dbReference type="Bgee" id="FBgn0014455">
    <property type="expression patterns" value="Expressed in secondary oocyte and 156 other cell types or tissues"/>
</dbReference>
<dbReference type="ExpressionAtlas" id="Q27580">
    <property type="expression patterns" value="baseline and differential"/>
</dbReference>
<dbReference type="GO" id="GO:0005829">
    <property type="term" value="C:cytosol"/>
    <property type="evidence" value="ECO:0000318"/>
    <property type="project" value="GO_Central"/>
</dbReference>
<dbReference type="GO" id="GO:0004013">
    <property type="term" value="F:adenosylhomocysteinase activity"/>
    <property type="evidence" value="ECO:0000250"/>
    <property type="project" value="FlyBase"/>
</dbReference>
<dbReference type="GO" id="GO:0006730">
    <property type="term" value="P:one-carbon metabolic process"/>
    <property type="evidence" value="ECO:0007669"/>
    <property type="project" value="UniProtKB-KW"/>
</dbReference>
<dbReference type="GO" id="GO:0033353">
    <property type="term" value="P:S-adenosylmethionine cycle"/>
    <property type="evidence" value="ECO:0000315"/>
    <property type="project" value="UniProtKB"/>
</dbReference>
<dbReference type="CDD" id="cd00401">
    <property type="entry name" value="SAHH"/>
    <property type="match status" value="1"/>
</dbReference>
<dbReference type="FunFam" id="3.40.50.1480:FF:000004">
    <property type="entry name" value="Adenosylhomocysteinase"/>
    <property type="match status" value="1"/>
</dbReference>
<dbReference type="FunFam" id="3.40.50.720:FF:000004">
    <property type="entry name" value="Adenosylhomocysteinase"/>
    <property type="match status" value="1"/>
</dbReference>
<dbReference type="Gene3D" id="3.40.50.1480">
    <property type="entry name" value="Adenosylhomocysteinase-like"/>
    <property type="match status" value="3"/>
</dbReference>
<dbReference type="Gene3D" id="3.40.50.720">
    <property type="entry name" value="NAD(P)-binding Rossmann-like Domain"/>
    <property type="match status" value="1"/>
</dbReference>
<dbReference type="HAMAP" id="MF_00563">
    <property type="entry name" value="AdoHcyase"/>
    <property type="match status" value="1"/>
</dbReference>
<dbReference type="InterPro" id="IPR042172">
    <property type="entry name" value="Adenosylhomocyst_ase-like_sf"/>
</dbReference>
<dbReference type="InterPro" id="IPR000043">
    <property type="entry name" value="Adenosylhomocysteinase-like"/>
</dbReference>
<dbReference type="InterPro" id="IPR015878">
    <property type="entry name" value="Ado_hCys_hydrolase_NAD-bd"/>
</dbReference>
<dbReference type="InterPro" id="IPR036291">
    <property type="entry name" value="NAD(P)-bd_dom_sf"/>
</dbReference>
<dbReference type="InterPro" id="IPR020082">
    <property type="entry name" value="S-Ado-L-homoCys_hydrolase_CS"/>
</dbReference>
<dbReference type="NCBIfam" id="TIGR00936">
    <property type="entry name" value="ahcY"/>
    <property type="match status" value="1"/>
</dbReference>
<dbReference type="NCBIfam" id="NF004005">
    <property type="entry name" value="PRK05476.2-3"/>
    <property type="match status" value="1"/>
</dbReference>
<dbReference type="PANTHER" id="PTHR23420">
    <property type="entry name" value="ADENOSYLHOMOCYSTEINASE"/>
    <property type="match status" value="1"/>
</dbReference>
<dbReference type="PANTHER" id="PTHR23420:SF0">
    <property type="entry name" value="ADENOSYLHOMOCYSTEINASE"/>
    <property type="match status" value="1"/>
</dbReference>
<dbReference type="Pfam" id="PF05221">
    <property type="entry name" value="AdoHcyase"/>
    <property type="match status" value="2"/>
</dbReference>
<dbReference type="Pfam" id="PF00670">
    <property type="entry name" value="AdoHcyase_NAD"/>
    <property type="match status" value="1"/>
</dbReference>
<dbReference type="PIRSF" id="PIRSF001109">
    <property type="entry name" value="Ad_hcy_hydrolase"/>
    <property type="match status" value="1"/>
</dbReference>
<dbReference type="SMART" id="SM00996">
    <property type="entry name" value="AdoHcyase"/>
    <property type="match status" value="1"/>
</dbReference>
<dbReference type="SMART" id="SM00997">
    <property type="entry name" value="AdoHcyase_NAD"/>
    <property type="match status" value="1"/>
</dbReference>
<dbReference type="SUPFAM" id="SSF52283">
    <property type="entry name" value="Formate/glycerate dehydrogenase catalytic domain-like"/>
    <property type="match status" value="1"/>
</dbReference>
<dbReference type="SUPFAM" id="SSF51735">
    <property type="entry name" value="NAD(P)-binding Rossmann-fold domains"/>
    <property type="match status" value="1"/>
</dbReference>
<dbReference type="PROSITE" id="PS00738">
    <property type="entry name" value="ADOHCYASE_1"/>
    <property type="match status" value="1"/>
</dbReference>
<dbReference type="PROSITE" id="PS00739">
    <property type="entry name" value="ADOHCYASE_2"/>
    <property type="match status" value="1"/>
</dbReference>
<reference key="1">
    <citation type="journal article" date="1997" name="Mol. Gen. Genet.">
        <title>The S-adenosyl-L-homocysteine hydrolase of Drosophila melanogaster: identification, deduced amino acid sequence and cytological localization of the structural gene.</title>
        <authorList>
            <person name="Caggese C."/>
            <person name="Ragone G."/>
            <person name="Barsanti P."/>
            <person name="Moschetti R."/>
            <person name="Messina A."/>
            <person name="Massari S."/>
            <person name="Caizzi R."/>
        </authorList>
    </citation>
    <scope>NUCLEOTIDE SEQUENCE [MRNA]</scope>
</reference>
<reference key="2">
    <citation type="journal article" date="2000" name="Science">
        <title>The genome sequence of Drosophila melanogaster.</title>
        <authorList>
            <person name="Adams M.D."/>
            <person name="Celniker S.E."/>
            <person name="Holt R.A."/>
            <person name="Evans C.A."/>
            <person name="Gocayne J.D."/>
            <person name="Amanatides P.G."/>
            <person name="Scherer S.E."/>
            <person name="Li P.W."/>
            <person name="Hoskins R.A."/>
            <person name="Galle R.F."/>
            <person name="George R.A."/>
            <person name="Lewis S.E."/>
            <person name="Richards S."/>
            <person name="Ashburner M."/>
            <person name="Henderson S.N."/>
            <person name="Sutton G.G."/>
            <person name="Wortman J.R."/>
            <person name="Yandell M.D."/>
            <person name="Zhang Q."/>
            <person name="Chen L.X."/>
            <person name="Brandon R.C."/>
            <person name="Rogers Y.-H.C."/>
            <person name="Blazej R.G."/>
            <person name="Champe M."/>
            <person name="Pfeiffer B.D."/>
            <person name="Wan K.H."/>
            <person name="Doyle C."/>
            <person name="Baxter E.G."/>
            <person name="Helt G."/>
            <person name="Nelson C.R."/>
            <person name="Miklos G.L.G."/>
            <person name="Abril J.F."/>
            <person name="Agbayani A."/>
            <person name="An H.-J."/>
            <person name="Andrews-Pfannkoch C."/>
            <person name="Baldwin D."/>
            <person name="Ballew R.M."/>
            <person name="Basu A."/>
            <person name="Baxendale J."/>
            <person name="Bayraktaroglu L."/>
            <person name="Beasley E.M."/>
            <person name="Beeson K.Y."/>
            <person name="Benos P.V."/>
            <person name="Berman B.P."/>
            <person name="Bhandari D."/>
            <person name="Bolshakov S."/>
            <person name="Borkova D."/>
            <person name="Botchan M.R."/>
            <person name="Bouck J."/>
            <person name="Brokstein P."/>
            <person name="Brottier P."/>
            <person name="Burtis K.C."/>
            <person name="Busam D.A."/>
            <person name="Butler H."/>
            <person name="Cadieu E."/>
            <person name="Center A."/>
            <person name="Chandra I."/>
            <person name="Cherry J.M."/>
            <person name="Cawley S."/>
            <person name="Dahlke C."/>
            <person name="Davenport L.B."/>
            <person name="Davies P."/>
            <person name="de Pablos B."/>
            <person name="Delcher A."/>
            <person name="Deng Z."/>
            <person name="Mays A.D."/>
            <person name="Dew I."/>
            <person name="Dietz S.M."/>
            <person name="Dodson K."/>
            <person name="Doup L.E."/>
            <person name="Downes M."/>
            <person name="Dugan-Rocha S."/>
            <person name="Dunkov B.C."/>
            <person name="Dunn P."/>
            <person name="Durbin K.J."/>
            <person name="Evangelista C.C."/>
            <person name="Ferraz C."/>
            <person name="Ferriera S."/>
            <person name="Fleischmann W."/>
            <person name="Fosler C."/>
            <person name="Gabrielian A.E."/>
            <person name="Garg N.S."/>
            <person name="Gelbart W.M."/>
            <person name="Glasser K."/>
            <person name="Glodek A."/>
            <person name="Gong F."/>
            <person name="Gorrell J.H."/>
            <person name="Gu Z."/>
            <person name="Guan P."/>
            <person name="Harris M."/>
            <person name="Harris N.L."/>
            <person name="Harvey D.A."/>
            <person name="Heiman T.J."/>
            <person name="Hernandez J.R."/>
            <person name="Houck J."/>
            <person name="Hostin D."/>
            <person name="Houston K.A."/>
            <person name="Howland T.J."/>
            <person name="Wei M.-H."/>
            <person name="Ibegwam C."/>
            <person name="Jalali M."/>
            <person name="Kalush F."/>
            <person name="Karpen G.H."/>
            <person name="Ke Z."/>
            <person name="Kennison J.A."/>
            <person name="Ketchum K.A."/>
            <person name="Kimmel B.E."/>
            <person name="Kodira C.D."/>
            <person name="Kraft C.L."/>
            <person name="Kravitz S."/>
            <person name="Kulp D."/>
            <person name="Lai Z."/>
            <person name="Lasko P."/>
            <person name="Lei Y."/>
            <person name="Levitsky A.A."/>
            <person name="Li J.H."/>
            <person name="Li Z."/>
            <person name="Liang Y."/>
            <person name="Lin X."/>
            <person name="Liu X."/>
            <person name="Mattei B."/>
            <person name="McIntosh T.C."/>
            <person name="McLeod M.P."/>
            <person name="McPherson D."/>
            <person name="Merkulov G."/>
            <person name="Milshina N.V."/>
            <person name="Mobarry C."/>
            <person name="Morris J."/>
            <person name="Moshrefi A."/>
            <person name="Mount S.M."/>
            <person name="Moy M."/>
            <person name="Murphy B."/>
            <person name="Murphy L."/>
            <person name="Muzny D.M."/>
            <person name="Nelson D.L."/>
            <person name="Nelson D.R."/>
            <person name="Nelson K.A."/>
            <person name="Nixon K."/>
            <person name="Nusskern D.R."/>
            <person name="Pacleb J.M."/>
            <person name="Palazzolo M."/>
            <person name="Pittman G.S."/>
            <person name="Pan S."/>
            <person name="Pollard J."/>
            <person name="Puri V."/>
            <person name="Reese M.G."/>
            <person name="Reinert K."/>
            <person name="Remington K."/>
            <person name="Saunders R.D.C."/>
            <person name="Scheeler F."/>
            <person name="Shen H."/>
            <person name="Shue B.C."/>
            <person name="Siden-Kiamos I."/>
            <person name="Simpson M."/>
            <person name="Skupski M.P."/>
            <person name="Smith T.J."/>
            <person name="Spier E."/>
            <person name="Spradling A.C."/>
            <person name="Stapleton M."/>
            <person name="Strong R."/>
            <person name="Sun E."/>
            <person name="Svirskas R."/>
            <person name="Tector C."/>
            <person name="Turner R."/>
            <person name="Venter E."/>
            <person name="Wang A.H."/>
            <person name="Wang X."/>
            <person name="Wang Z.-Y."/>
            <person name="Wassarman D.A."/>
            <person name="Weinstock G.M."/>
            <person name="Weissenbach J."/>
            <person name="Williams S.M."/>
            <person name="Woodage T."/>
            <person name="Worley K.C."/>
            <person name="Wu D."/>
            <person name="Yang S."/>
            <person name="Yao Q.A."/>
            <person name="Ye J."/>
            <person name="Yeh R.-F."/>
            <person name="Zaveri J.S."/>
            <person name="Zhan M."/>
            <person name="Zhang G."/>
            <person name="Zhao Q."/>
            <person name="Zheng L."/>
            <person name="Zheng X.H."/>
            <person name="Zhong F.N."/>
            <person name="Zhong W."/>
            <person name="Zhou X."/>
            <person name="Zhu S.C."/>
            <person name="Zhu X."/>
            <person name="Smith H.O."/>
            <person name="Gibbs R.A."/>
            <person name="Myers E.W."/>
            <person name="Rubin G.M."/>
            <person name="Venter J.C."/>
        </authorList>
    </citation>
    <scope>NUCLEOTIDE SEQUENCE [LARGE SCALE GENOMIC DNA]</scope>
    <source>
        <strain>Berkeley</strain>
    </source>
</reference>
<reference key="3">
    <citation type="journal article" date="2002" name="Genome Biol.">
        <title>Annotation of the Drosophila melanogaster euchromatic genome: a systematic review.</title>
        <authorList>
            <person name="Misra S."/>
            <person name="Crosby M.A."/>
            <person name="Mungall C.J."/>
            <person name="Matthews B.B."/>
            <person name="Campbell K.S."/>
            <person name="Hradecky P."/>
            <person name="Huang Y."/>
            <person name="Kaminker J.S."/>
            <person name="Millburn G.H."/>
            <person name="Prochnik S.E."/>
            <person name="Smith C.D."/>
            <person name="Tupy J.L."/>
            <person name="Whitfield E.J."/>
            <person name="Bayraktaroglu L."/>
            <person name="Berman B.P."/>
            <person name="Bettencourt B.R."/>
            <person name="Celniker S.E."/>
            <person name="de Grey A.D.N.J."/>
            <person name="Drysdale R.A."/>
            <person name="Harris N.L."/>
            <person name="Richter J."/>
            <person name="Russo S."/>
            <person name="Schroeder A.J."/>
            <person name="Shu S.Q."/>
            <person name="Stapleton M."/>
            <person name="Yamada C."/>
            <person name="Ashburner M."/>
            <person name="Gelbart W.M."/>
            <person name="Rubin G.M."/>
            <person name="Lewis S.E."/>
        </authorList>
    </citation>
    <scope>GENOME REANNOTATION</scope>
    <source>
        <strain>Berkeley</strain>
    </source>
</reference>
<reference key="4">
    <citation type="journal article" date="2002" name="Genome Biol.">
        <title>A Drosophila full-length cDNA resource.</title>
        <authorList>
            <person name="Stapleton M."/>
            <person name="Carlson J.W."/>
            <person name="Brokstein P."/>
            <person name="Yu C."/>
            <person name="Champe M."/>
            <person name="George R.A."/>
            <person name="Guarin H."/>
            <person name="Kronmiller B."/>
            <person name="Pacleb J.M."/>
            <person name="Park S."/>
            <person name="Wan K.H."/>
            <person name="Rubin G.M."/>
            <person name="Celniker S.E."/>
        </authorList>
    </citation>
    <scope>NUCLEOTIDE SEQUENCE [LARGE SCALE MRNA]</scope>
    <source>
        <strain>Berkeley</strain>
        <tissue>Ovary</tissue>
    </source>
</reference>
<reference key="5">
    <citation type="journal article" date="2016" name="Genes Dev.">
        <title>Tissue-specific down-regulation of S-adenosyl-homocysteine via suppression of dAhcyL1/dAhcyL2 extends health span and life span in Drosophila.</title>
        <authorList>
            <person name="Parkhitko A.A."/>
            <person name="Binari R."/>
            <person name="Zhang N."/>
            <person name="Asara J.M."/>
            <person name="Demontis F."/>
            <person name="Perrimon N."/>
        </authorList>
    </citation>
    <scope>INTERACTION WITH AHCYL1</scope>
    <scope>DISRUPTION PHENOTYPE</scope>
</reference>
<sequence>MSKPSYKVADISLAEWGRKAIIIAENEMPGLMACRKKYGPSKPLKGARITGCLHMTVQTAVLIETLVELGAQVQWSSCNIFSTQDNAAAAIAATGVPVYAWKGETDEEYMWCIEQTLVFPDGQPLNMILDDGGDLTNLVHEKFPQYLKNIKGLSEETTTGVHNLYKMFKEGRLGVPAINVNDSVTKSKFDNLYGCRESLIDGIKRATDVMIAGKVCCVAGYGDVGKGCAQALKGFGGRVIVTEVDPINALQAAMEGYEVTTMEEASKEASIFVTTTGCRDIITSVHLQQMPDDAIVCNIGHFDIEIDVDWLNANAKEKVNVKPQVDRYTMQSGKHIILLAEGRLVNLGCAHGHPSFVMSNSFTNQVLAQIELWTKSDKYAVGVHVLPKILDEEVASLHLEKLGVKLTKLTEKQATYLGVSQTGPFKPDHYRY</sequence>
<gene>
    <name evidence="4 7" type="primary">Ahcy</name>
    <name evidence="3 7" type="synonym">Ahcy13</name>
    <name evidence="7" type="ORF">CG11654</name>
</gene>
<proteinExistence type="evidence at protein level"/>
<feature type="chain" id="PRO_0000116913" description="Adenosylhomocysteinase">
    <location>
        <begin position="1"/>
        <end position="432"/>
    </location>
</feature>
<feature type="binding site" evidence="1">
    <location>
        <position position="56"/>
    </location>
    <ligand>
        <name>substrate</name>
    </ligand>
</feature>
<feature type="binding site" evidence="1">
    <location>
        <position position="131"/>
    </location>
    <ligand>
        <name>substrate</name>
    </ligand>
</feature>
<feature type="binding site" evidence="1">
    <location>
        <position position="156"/>
    </location>
    <ligand>
        <name>substrate</name>
    </ligand>
</feature>
<feature type="binding site" evidence="1">
    <location>
        <begin position="157"/>
        <end position="159"/>
    </location>
    <ligand>
        <name>NAD(+)</name>
        <dbReference type="ChEBI" id="CHEBI:57540"/>
    </ligand>
</feature>
<feature type="binding site" evidence="1">
    <location>
        <position position="186"/>
    </location>
    <ligand>
        <name>substrate</name>
    </ligand>
</feature>
<feature type="binding site" evidence="1">
    <location>
        <position position="190"/>
    </location>
    <ligand>
        <name>substrate</name>
    </ligand>
</feature>
<feature type="binding site" evidence="1">
    <location>
        <begin position="222"/>
        <end position="227"/>
    </location>
    <ligand>
        <name>NAD(+)</name>
        <dbReference type="ChEBI" id="CHEBI:57540"/>
    </ligand>
</feature>
<feature type="binding site" evidence="1">
    <location>
        <position position="243"/>
    </location>
    <ligand>
        <name>NAD(+)</name>
        <dbReference type="ChEBI" id="CHEBI:57540"/>
    </ligand>
</feature>
<feature type="binding site" evidence="1">
    <location>
        <position position="248"/>
    </location>
    <ligand>
        <name>NAD(+)</name>
        <dbReference type="ChEBI" id="CHEBI:57540"/>
    </ligand>
</feature>
<feature type="binding site" evidence="1">
    <location>
        <begin position="299"/>
        <end position="301"/>
    </location>
    <ligand>
        <name>NAD(+)</name>
        <dbReference type="ChEBI" id="CHEBI:57540"/>
    </ligand>
</feature>
<feature type="binding site" evidence="1">
    <location>
        <position position="346"/>
    </location>
    <ligand>
        <name>NAD(+)</name>
        <dbReference type="ChEBI" id="CHEBI:57540"/>
    </ligand>
</feature>
<feature type="binding site" evidence="1">
    <location>
        <position position="353"/>
    </location>
    <ligand>
        <name>NAD(+)</name>
        <dbReference type="ChEBI" id="CHEBI:57540"/>
    </ligand>
</feature>
<feature type="binding site" evidence="1">
    <location>
        <begin position="426"/>
        <end position="430"/>
    </location>
    <ligand>
        <name>NAD(+)</name>
        <dbReference type="ChEBI" id="CHEBI:57540"/>
    </ligand>
</feature>
<feature type="binding site" evidence="1">
    <location>
        <position position="426"/>
    </location>
    <ligand>
        <name>NAD(+)</name>
        <dbReference type="ChEBI" id="CHEBI:57540"/>
    </ligand>
</feature>
<feature type="binding site" evidence="1">
    <location>
        <position position="430"/>
    </location>
    <ligand>
        <name>NAD(+)</name>
        <dbReference type="ChEBI" id="CHEBI:57540"/>
    </ligand>
</feature>
<feature type="sequence conflict" description="In Ref. 1; CAA64892." evidence="5" ref="1">
    <original>Y</original>
    <variation>F</variation>
    <location>
        <position position="146"/>
    </location>
</feature>
<feature type="sequence conflict" description="In Ref. 1; CAA64892." evidence="5" ref="1">
    <original>A</original>
    <variation>G</variation>
    <location>
        <position position="265"/>
    </location>
</feature>
<feature type="sequence conflict" description="In Ref. 1; CAA64892." evidence="5" ref="1">
    <original>A</original>
    <variation>R</variation>
    <location>
        <position position="294"/>
    </location>
</feature>
<feature type="sequence conflict" description="In Ref. 4; AAM27497." evidence="5" ref="4">
    <original>DRY</original>
    <variation>IRH</variation>
    <location>
        <begin position="326"/>
        <end position="328"/>
    </location>
</feature>
<feature type="sequence conflict" description="In Ref. 1; CAA64892." evidence="5" ref="1">
    <original>Q</original>
    <variation>K</variation>
    <location>
        <position position="331"/>
    </location>
</feature>
<feature type="sequence conflict" description="In Ref. 1; CAA64892." evidence="5" ref="1">
    <original>H</original>
    <variation>D</variation>
    <location>
        <position position="351"/>
    </location>
</feature>
<feature type="sequence conflict" description="In Ref. 1; CAA64892." evidence="5" ref="1">
    <original>YA</original>
    <variation>S</variation>
    <location>
        <begin position="379"/>
        <end position="380"/>
    </location>
</feature>
<protein>
    <recommendedName>
        <fullName evidence="4 7">Adenosylhomocysteinase</fullName>
        <shortName evidence="4">AdoHcyase</shortName>
        <ecNumber evidence="6">3.13.2.1</ecNumber>
    </recommendedName>
    <alternativeName>
        <fullName evidence="4">S-adenosyl-L-homocysteine hydrolase</fullName>
    </alternativeName>
</protein>
<name>SAHH_DROME</name>